<comment type="function">
    <text evidence="1">Large subunit of the glutamine-dependent carbamoyl phosphate synthetase (CPSase). CPSase catalyzes the formation of carbamoyl phosphate from the ammonia moiety of glutamine, carbonate, and phosphate donated by ATP, constituting the first step of 2 biosynthetic pathways, one leading to arginine and/or urea and the other to pyrimidine nucleotides. The large subunit (synthetase) binds the substrates ammonia (free or transferred from glutamine from the small subunit), hydrogencarbonate and ATP and carries out an ATP-coupled ligase reaction, activating hydrogencarbonate by forming carboxy phosphate which reacts with ammonia to form carbamoyl phosphate.</text>
</comment>
<comment type="catalytic activity">
    <reaction evidence="1">
        <text>hydrogencarbonate + L-glutamine + 2 ATP + H2O = carbamoyl phosphate + L-glutamate + 2 ADP + phosphate + 2 H(+)</text>
        <dbReference type="Rhea" id="RHEA:18633"/>
        <dbReference type="ChEBI" id="CHEBI:15377"/>
        <dbReference type="ChEBI" id="CHEBI:15378"/>
        <dbReference type="ChEBI" id="CHEBI:17544"/>
        <dbReference type="ChEBI" id="CHEBI:29985"/>
        <dbReference type="ChEBI" id="CHEBI:30616"/>
        <dbReference type="ChEBI" id="CHEBI:43474"/>
        <dbReference type="ChEBI" id="CHEBI:58228"/>
        <dbReference type="ChEBI" id="CHEBI:58359"/>
        <dbReference type="ChEBI" id="CHEBI:456216"/>
        <dbReference type="EC" id="6.3.5.5"/>
    </reaction>
</comment>
<comment type="catalytic activity">
    <molecule>Carbamoyl phosphate synthase large chain</molecule>
    <reaction evidence="1">
        <text>hydrogencarbonate + NH4(+) + 2 ATP = carbamoyl phosphate + 2 ADP + phosphate + 2 H(+)</text>
        <dbReference type="Rhea" id="RHEA:18029"/>
        <dbReference type="ChEBI" id="CHEBI:15378"/>
        <dbReference type="ChEBI" id="CHEBI:17544"/>
        <dbReference type="ChEBI" id="CHEBI:28938"/>
        <dbReference type="ChEBI" id="CHEBI:30616"/>
        <dbReference type="ChEBI" id="CHEBI:43474"/>
        <dbReference type="ChEBI" id="CHEBI:58228"/>
        <dbReference type="ChEBI" id="CHEBI:456216"/>
        <dbReference type="EC" id="6.3.4.16"/>
    </reaction>
</comment>
<comment type="cofactor">
    <cofactor evidence="1">
        <name>Mg(2+)</name>
        <dbReference type="ChEBI" id="CHEBI:18420"/>
    </cofactor>
    <cofactor evidence="1">
        <name>Mn(2+)</name>
        <dbReference type="ChEBI" id="CHEBI:29035"/>
    </cofactor>
    <text evidence="1">Binds 4 Mg(2+) or Mn(2+) ions per subunit.</text>
</comment>
<comment type="pathway">
    <text evidence="1">Amino-acid biosynthesis; L-arginine biosynthesis; carbamoyl phosphate from bicarbonate: step 1/1.</text>
</comment>
<comment type="pathway">
    <text evidence="1">Pyrimidine metabolism; UMP biosynthesis via de novo pathway; (S)-dihydroorotate from bicarbonate: step 1/3.</text>
</comment>
<comment type="subunit">
    <text evidence="1">Composed of two chains; the small (or glutamine) chain promotes the hydrolysis of glutamine to ammonia, which is used by the large (or ammonia) chain to synthesize carbamoyl phosphate. Tetramer of heterodimers (alpha,beta)4.</text>
</comment>
<comment type="domain">
    <text evidence="1">The large subunit is composed of 2 ATP-grasp domains that are involved in binding the 2 ATP molecules needed for carbamoyl phosphate synthesis. The N-terminal ATP-grasp domain (referred to as the carboxyphosphate synthetic component) catalyzes the ATP-dependent phosphorylation of hydrogencarbonate to carboxyphosphate and the subsequent nucleophilic attack by ammonia to form a carbamate intermediate. The C-terminal ATP-grasp domain (referred to as the carbamoyl phosphate synthetic component) then catalyzes the phosphorylation of carbamate with the second ATP to form the end product carbamoyl phosphate. The reactive and unstable enzyme intermediates are sequentially channeled from one active site to the next through the interior of the protein over a distance of at least 96 A.</text>
</comment>
<comment type="similarity">
    <text evidence="1">Belongs to the CarB family.</text>
</comment>
<reference key="1">
    <citation type="journal article" date="2006" name="Proc. Natl. Acad. Sci. U.S.A.">
        <title>Multireplicon genome architecture of Lactobacillus salivarius.</title>
        <authorList>
            <person name="Claesson M.J."/>
            <person name="Li Y."/>
            <person name="Leahy S."/>
            <person name="Canchaya C."/>
            <person name="van Pijkeren J.P."/>
            <person name="Cerdeno-Tarraga A.M."/>
            <person name="Parkhill J."/>
            <person name="Flynn S."/>
            <person name="O'Sullivan G.C."/>
            <person name="Collins J.K."/>
            <person name="Higgins D."/>
            <person name="Shanahan F."/>
            <person name="Fitzgerald G.F."/>
            <person name="van Sinderen D."/>
            <person name="O'Toole P.W."/>
        </authorList>
    </citation>
    <scope>NUCLEOTIDE SEQUENCE [LARGE SCALE GENOMIC DNA]</scope>
    <source>
        <strain>UCC118</strain>
    </source>
</reference>
<sequence length="1061" mass="117109">MPKRTDVHKIMVIGSGPIIIGQAAEFDYSGTQACLALREEGYEVVLVNSNPATIMTDTEIADKVYIEPLTVESVSRIIRQEFPDAILPTLGGQIGLNLAIALAKTGILEELGIKLLGTQLDAIDQAEDRQRFKDLMQELNEPVPDSKTVETVQEALDFAAEIGYPVIVRPAFTMGGTGGGLCDNPEQLKEIVANGLELSPATQCLIEKSIMGYKEIEFEVMRDADNNAMVVCSMENFDPVGIHTGDSIVFAPTQTLSDREYQMLRNCSLKLIRALKIEGGCNVQLALDPNSYRYYVIEVNPRVSRSSALASKATGYPIAKLAAKIAVGLTLDEIKNPVTGTTFAEFEPALDYVVAKIPRWPFDKFTRANRRLGTQMKATGEVMAIGRSAQEALQKAVRSLEIDEKDLISAKAQSATDDEVEEKLFHAQDDRLFYIAEAFRRGYTIEEVHELTKINLYYLDIVKQIVELESELSQNKEDLDVLKRAKRYGYSDYTIAKLWGTTEDEVRNLRKEHKLLPVYKMVDTCAAEFDSSTPYFYSSYDLENESKKSDKKSVLVIGSGPIRIGQGVEFDYATVHSVKAIQKLGYEAIVMNSNPETVSTDFSISDKLYFEPLTLEDVLNVIDLEQPMGVIVQFGGQTAINLAAGLEAHSVKILGTTVEDLDRAEDRELFDQTIKNLGLKQPIGKTATTQEQVIACAEEIGYPVLVRPSYVLGGRAMEIVNNEQELLDYLAQNAPAEIDHPILVDAYLSGLECEVDAICDGKDVLLPGIMEHIEHAGVHSGDSMAVYPPQSFDENIKQQIVDATEKLAVALKCVGIMNIQFIIHNNEAYVLEVNPRASRTVPFLSKITGIEMAQVATRVILGESLAEQGYQSGLYRESDMVHVKAPVFSFSKLADVDSFLGPEMKSTGEVMGSDYTFEKALYKAFTGAKMELPDNGNVLLTIEDKDKDAVLPLAKRFSKIGYRMFATEGTSQFLRENGLFVQTVDKLGKDTGNETSLHDLIVNDGVDLVINTMSHDQEVASDGFVIRQLAIEHNIALLTSLNTADALLKALENRSFATNSL</sequence>
<name>CARB_LIGS1</name>
<keyword id="KW-0028">Amino-acid biosynthesis</keyword>
<keyword id="KW-0055">Arginine biosynthesis</keyword>
<keyword id="KW-0067">ATP-binding</keyword>
<keyword id="KW-0436">Ligase</keyword>
<keyword id="KW-0460">Magnesium</keyword>
<keyword id="KW-0464">Manganese</keyword>
<keyword id="KW-0479">Metal-binding</keyword>
<keyword id="KW-0547">Nucleotide-binding</keyword>
<keyword id="KW-0665">Pyrimidine biosynthesis</keyword>
<keyword id="KW-1185">Reference proteome</keyword>
<keyword id="KW-0677">Repeat</keyword>
<organism>
    <name type="scientific">Ligilactobacillus salivarius (strain UCC118)</name>
    <name type="common">Lactobacillus salivarius</name>
    <dbReference type="NCBI Taxonomy" id="362948"/>
    <lineage>
        <taxon>Bacteria</taxon>
        <taxon>Bacillati</taxon>
        <taxon>Bacillota</taxon>
        <taxon>Bacilli</taxon>
        <taxon>Lactobacillales</taxon>
        <taxon>Lactobacillaceae</taxon>
        <taxon>Ligilactobacillus</taxon>
    </lineage>
</organism>
<dbReference type="EC" id="6.3.4.16" evidence="1"/>
<dbReference type="EC" id="6.3.5.5" evidence="1"/>
<dbReference type="EMBL" id="CP000233">
    <property type="protein sequence ID" value="ABD99008.1"/>
    <property type="molecule type" value="Genomic_DNA"/>
</dbReference>
<dbReference type="RefSeq" id="WP_011475574.1">
    <property type="nucleotide sequence ID" value="NC_007929.1"/>
</dbReference>
<dbReference type="RefSeq" id="YP_535091.1">
    <property type="nucleotide sequence ID" value="NC_007929.1"/>
</dbReference>
<dbReference type="SMR" id="Q1WVA9"/>
<dbReference type="STRING" id="362948.LSL_0193"/>
<dbReference type="KEGG" id="lsl:LSL_0193"/>
<dbReference type="PATRIC" id="fig|362948.14.peg.270"/>
<dbReference type="HOGENOM" id="CLU_000513_1_2_9"/>
<dbReference type="OrthoDB" id="9804197at2"/>
<dbReference type="UniPathway" id="UPA00068">
    <property type="reaction ID" value="UER00171"/>
</dbReference>
<dbReference type="UniPathway" id="UPA00070">
    <property type="reaction ID" value="UER00115"/>
</dbReference>
<dbReference type="Proteomes" id="UP000006559">
    <property type="component" value="Chromosome"/>
</dbReference>
<dbReference type="GO" id="GO:0005737">
    <property type="term" value="C:cytoplasm"/>
    <property type="evidence" value="ECO:0007669"/>
    <property type="project" value="TreeGrafter"/>
</dbReference>
<dbReference type="GO" id="GO:0005524">
    <property type="term" value="F:ATP binding"/>
    <property type="evidence" value="ECO:0007669"/>
    <property type="project" value="UniProtKB-UniRule"/>
</dbReference>
<dbReference type="GO" id="GO:0004087">
    <property type="term" value="F:carbamoyl-phosphate synthase (ammonia) activity"/>
    <property type="evidence" value="ECO:0007669"/>
    <property type="project" value="RHEA"/>
</dbReference>
<dbReference type="GO" id="GO:0004088">
    <property type="term" value="F:carbamoyl-phosphate synthase (glutamine-hydrolyzing) activity"/>
    <property type="evidence" value="ECO:0007669"/>
    <property type="project" value="UniProtKB-UniRule"/>
</dbReference>
<dbReference type="GO" id="GO:0046872">
    <property type="term" value="F:metal ion binding"/>
    <property type="evidence" value="ECO:0007669"/>
    <property type="project" value="UniProtKB-KW"/>
</dbReference>
<dbReference type="GO" id="GO:0044205">
    <property type="term" value="P:'de novo' UMP biosynthetic process"/>
    <property type="evidence" value="ECO:0007669"/>
    <property type="project" value="UniProtKB-UniRule"/>
</dbReference>
<dbReference type="GO" id="GO:0006541">
    <property type="term" value="P:glutamine metabolic process"/>
    <property type="evidence" value="ECO:0007669"/>
    <property type="project" value="TreeGrafter"/>
</dbReference>
<dbReference type="GO" id="GO:0006526">
    <property type="term" value="P:L-arginine biosynthetic process"/>
    <property type="evidence" value="ECO:0007669"/>
    <property type="project" value="UniProtKB-UniRule"/>
</dbReference>
<dbReference type="CDD" id="cd01424">
    <property type="entry name" value="MGS_CPS_II"/>
    <property type="match status" value="1"/>
</dbReference>
<dbReference type="FunFam" id="1.10.1030.10:FF:000002">
    <property type="entry name" value="Carbamoyl-phosphate synthase large chain"/>
    <property type="match status" value="1"/>
</dbReference>
<dbReference type="FunFam" id="3.30.1490.20:FF:000001">
    <property type="entry name" value="Carbamoyl-phosphate synthase large chain"/>
    <property type="match status" value="1"/>
</dbReference>
<dbReference type="FunFam" id="3.30.470.20:FF:000001">
    <property type="entry name" value="Carbamoyl-phosphate synthase large chain"/>
    <property type="match status" value="1"/>
</dbReference>
<dbReference type="FunFam" id="3.30.470.20:FF:000026">
    <property type="entry name" value="Carbamoyl-phosphate synthase large chain"/>
    <property type="match status" value="1"/>
</dbReference>
<dbReference type="FunFam" id="3.40.50.20:FF:000001">
    <property type="entry name" value="Carbamoyl-phosphate synthase large chain"/>
    <property type="match status" value="2"/>
</dbReference>
<dbReference type="Gene3D" id="3.40.50.20">
    <property type="match status" value="2"/>
</dbReference>
<dbReference type="Gene3D" id="3.30.1490.20">
    <property type="entry name" value="ATP-grasp fold, A domain"/>
    <property type="match status" value="1"/>
</dbReference>
<dbReference type="Gene3D" id="3.30.470.20">
    <property type="entry name" value="ATP-grasp fold, B domain"/>
    <property type="match status" value="2"/>
</dbReference>
<dbReference type="Gene3D" id="1.10.1030.10">
    <property type="entry name" value="Carbamoyl-phosphate synthetase, large subunit oligomerisation domain"/>
    <property type="match status" value="1"/>
</dbReference>
<dbReference type="Gene3D" id="3.40.50.1380">
    <property type="entry name" value="Methylglyoxal synthase-like domain"/>
    <property type="match status" value="1"/>
</dbReference>
<dbReference type="HAMAP" id="MF_01210_A">
    <property type="entry name" value="CPSase_L_chain_A"/>
    <property type="match status" value="1"/>
</dbReference>
<dbReference type="HAMAP" id="MF_01210_B">
    <property type="entry name" value="CPSase_L_chain_B"/>
    <property type="match status" value="1"/>
</dbReference>
<dbReference type="InterPro" id="IPR011761">
    <property type="entry name" value="ATP-grasp"/>
</dbReference>
<dbReference type="InterPro" id="IPR013815">
    <property type="entry name" value="ATP_grasp_subdomain_1"/>
</dbReference>
<dbReference type="InterPro" id="IPR006275">
    <property type="entry name" value="CarbamoylP_synth_lsu"/>
</dbReference>
<dbReference type="InterPro" id="IPR005480">
    <property type="entry name" value="CarbamoylP_synth_lsu_oligo"/>
</dbReference>
<dbReference type="InterPro" id="IPR036897">
    <property type="entry name" value="CarbamoylP_synth_lsu_oligo_sf"/>
</dbReference>
<dbReference type="InterPro" id="IPR005479">
    <property type="entry name" value="CbamoylP_synth_lsu-like_ATP-bd"/>
</dbReference>
<dbReference type="InterPro" id="IPR005483">
    <property type="entry name" value="CbamoylP_synth_lsu_CPSase_dom"/>
</dbReference>
<dbReference type="InterPro" id="IPR011607">
    <property type="entry name" value="MGS-like_dom"/>
</dbReference>
<dbReference type="InterPro" id="IPR036914">
    <property type="entry name" value="MGS-like_dom_sf"/>
</dbReference>
<dbReference type="InterPro" id="IPR033937">
    <property type="entry name" value="MGS_CPS_CarB"/>
</dbReference>
<dbReference type="InterPro" id="IPR016185">
    <property type="entry name" value="PreATP-grasp_dom_sf"/>
</dbReference>
<dbReference type="NCBIfam" id="TIGR01369">
    <property type="entry name" value="CPSaseII_lrg"/>
    <property type="match status" value="1"/>
</dbReference>
<dbReference type="NCBIfam" id="NF003671">
    <property type="entry name" value="PRK05294.1"/>
    <property type="match status" value="1"/>
</dbReference>
<dbReference type="NCBIfam" id="NF009455">
    <property type="entry name" value="PRK12815.1"/>
    <property type="match status" value="1"/>
</dbReference>
<dbReference type="PANTHER" id="PTHR11405:SF53">
    <property type="entry name" value="CARBAMOYL-PHOSPHATE SYNTHASE [AMMONIA], MITOCHONDRIAL"/>
    <property type="match status" value="1"/>
</dbReference>
<dbReference type="PANTHER" id="PTHR11405">
    <property type="entry name" value="CARBAMOYLTRANSFERASE FAMILY MEMBER"/>
    <property type="match status" value="1"/>
</dbReference>
<dbReference type="Pfam" id="PF02786">
    <property type="entry name" value="CPSase_L_D2"/>
    <property type="match status" value="2"/>
</dbReference>
<dbReference type="Pfam" id="PF02787">
    <property type="entry name" value="CPSase_L_D3"/>
    <property type="match status" value="1"/>
</dbReference>
<dbReference type="Pfam" id="PF02142">
    <property type="entry name" value="MGS"/>
    <property type="match status" value="1"/>
</dbReference>
<dbReference type="PRINTS" id="PR00098">
    <property type="entry name" value="CPSASE"/>
</dbReference>
<dbReference type="SMART" id="SM01096">
    <property type="entry name" value="CPSase_L_D3"/>
    <property type="match status" value="1"/>
</dbReference>
<dbReference type="SMART" id="SM00851">
    <property type="entry name" value="MGS"/>
    <property type="match status" value="1"/>
</dbReference>
<dbReference type="SUPFAM" id="SSF48108">
    <property type="entry name" value="Carbamoyl phosphate synthetase, large subunit connection domain"/>
    <property type="match status" value="1"/>
</dbReference>
<dbReference type="SUPFAM" id="SSF56059">
    <property type="entry name" value="Glutathione synthetase ATP-binding domain-like"/>
    <property type="match status" value="2"/>
</dbReference>
<dbReference type="SUPFAM" id="SSF52335">
    <property type="entry name" value="Methylglyoxal synthase-like"/>
    <property type="match status" value="1"/>
</dbReference>
<dbReference type="SUPFAM" id="SSF52440">
    <property type="entry name" value="PreATP-grasp domain"/>
    <property type="match status" value="2"/>
</dbReference>
<dbReference type="PROSITE" id="PS50975">
    <property type="entry name" value="ATP_GRASP"/>
    <property type="match status" value="2"/>
</dbReference>
<dbReference type="PROSITE" id="PS00866">
    <property type="entry name" value="CPSASE_1"/>
    <property type="match status" value="2"/>
</dbReference>
<dbReference type="PROSITE" id="PS00867">
    <property type="entry name" value="CPSASE_2"/>
    <property type="match status" value="2"/>
</dbReference>
<dbReference type="PROSITE" id="PS51855">
    <property type="entry name" value="MGS"/>
    <property type="match status" value="1"/>
</dbReference>
<feature type="chain" id="PRO_1000066358" description="Carbamoyl phosphate synthase large chain">
    <location>
        <begin position="1"/>
        <end position="1061"/>
    </location>
</feature>
<feature type="domain" description="ATP-grasp 1" evidence="1">
    <location>
        <begin position="133"/>
        <end position="327"/>
    </location>
</feature>
<feature type="domain" description="ATP-grasp 2" evidence="1">
    <location>
        <begin position="671"/>
        <end position="861"/>
    </location>
</feature>
<feature type="domain" description="MGS-like" evidence="1">
    <location>
        <begin position="930"/>
        <end position="1061"/>
    </location>
</feature>
<feature type="region of interest" description="Carboxyphosphate synthetic domain" evidence="1">
    <location>
        <begin position="1"/>
        <end position="401"/>
    </location>
</feature>
<feature type="region of interest" description="Oligomerization domain" evidence="1">
    <location>
        <begin position="402"/>
        <end position="546"/>
    </location>
</feature>
<feature type="region of interest" description="Carbamoyl phosphate synthetic domain" evidence="1">
    <location>
        <begin position="547"/>
        <end position="929"/>
    </location>
</feature>
<feature type="region of interest" description="Allosteric domain" evidence="1">
    <location>
        <begin position="930"/>
        <end position="1061"/>
    </location>
</feature>
<feature type="binding site" evidence="1">
    <location>
        <position position="129"/>
    </location>
    <ligand>
        <name>ATP</name>
        <dbReference type="ChEBI" id="CHEBI:30616"/>
        <label>1</label>
    </ligand>
</feature>
<feature type="binding site" evidence="1">
    <location>
        <position position="169"/>
    </location>
    <ligand>
        <name>ATP</name>
        <dbReference type="ChEBI" id="CHEBI:30616"/>
        <label>1</label>
    </ligand>
</feature>
<feature type="binding site" evidence="1">
    <location>
        <position position="175"/>
    </location>
    <ligand>
        <name>ATP</name>
        <dbReference type="ChEBI" id="CHEBI:30616"/>
        <label>1</label>
    </ligand>
</feature>
<feature type="binding site" evidence="1">
    <location>
        <position position="176"/>
    </location>
    <ligand>
        <name>ATP</name>
        <dbReference type="ChEBI" id="CHEBI:30616"/>
        <label>1</label>
    </ligand>
</feature>
<feature type="binding site" evidence="1">
    <location>
        <position position="208"/>
    </location>
    <ligand>
        <name>ATP</name>
        <dbReference type="ChEBI" id="CHEBI:30616"/>
        <label>1</label>
    </ligand>
</feature>
<feature type="binding site" evidence="1">
    <location>
        <position position="210"/>
    </location>
    <ligand>
        <name>ATP</name>
        <dbReference type="ChEBI" id="CHEBI:30616"/>
        <label>1</label>
    </ligand>
</feature>
<feature type="binding site" evidence="1">
    <location>
        <position position="215"/>
    </location>
    <ligand>
        <name>ATP</name>
        <dbReference type="ChEBI" id="CHEBI:30616"/>
        <label>1</label>
    </ligand>
</feature>
<feature type="binding site" evidence="1">
    <location>
        <position position="241"/>
    </location>
    <ligand>
        <name>ATP</name>
        <dbReference type="ChEBI" id="CHEBI:30616"/>
        <label>1</label>
    </ligand>
</feature>
<feature type="binding site" evidence="1">
    <location>
        <position position="242"/>
    </location>
    <ligand>
        <name>ATP</name>
        <dbReference type="ChEBI" id="CHEBI:30616"/>
        <label>1</label>
    </ligand>
</feature>
<feature type="binding site" evidence="1">
    <location>
        <position position="243"/>
    </location>
    <ligand>
        <name>ATP</name>
        <dbReference type="ChEBI" id="CHEBI:30616"/>
        <label>1</label>
    </ligand>
</feature>
<feature type="binding site" evidence="1">
    <location>
        <position position="284"/>
    </location>
    <ligand>
        <name>ATP</name>
        <dbReference type="ChEBI" id="CHEBI:30616"/>
        <label>1</label>
    </ligand>
</feature>
<feature type="binding site" evidence="1">
    <location>
        <position position="284"/>
    </location>
    <ligand>
        <name>Mg(2+)</name>
        <dbReference type="ChEBI" id="CHEBI:18420"/>
        <label>1</label>
    </ligand>
</feature>
<feature type="binding site" evidence="1">
    <location>
        <position position="284"/>
    </location>
    <ligand>
        <name>Mn(2+)</name>
        <dbReference type="ChEBI" id="CHEBI:29035"/>
        <label>1</label>
    </ligand>
</feature>
<feature type="binding site" evidence="1">
    <location>
        <position position="298"/>
    </location>
    <ligand>
        <name>ATP</name>
        <dbReference type="ChEBI" id="CHEBI:30616"/>
        <label>1</label>
    </ligand>
</feature>
<feature type="binding site" evidence="1">
    <location>
        <position position="298"/>
    </location>
    <ligand>
        <name>Mg(2+)</name>
        <dbReference type="ChEBI" id="CHEBI:18420"/>
        <label>1</label>
    </ligand>
</feature>
<feature type="binding site" evidence="1">
    <location>
        <position position="298"/>
    </location>
    <ligand>
        <name>Mg(2+)</name>
        <dbReference type="ChEBI" id="CHEBI:18420"/>
        <label>2</label>
    </ligand>
</feature>
<feature type="binding site" evidence="1">
    <location>
        <position position="298"/>
    </location>
    <ligand>
        <name>Mn(2+)</name>
        <dbReference type="ChEBI" id="CHEBI:29035"/>
        <label>1</label>
    </ligand>
</feature>
<feature type="binding site" evidence="1">
    <location>
        <position position="298"/>
    </location>
    <ligand>
        <name>Mn(2+)</name>
        <dbReference type="ChEBI" id="CHEBI:29035"/>
        <label>2</label>
    </ligand>
</feature>
<feature type="binding site" evidence="1">
    <location>
        <position position="300"/>
    </location>
    <ligand>
        <name>Mg(2+)</name>
        <dbReference type="ChEBI" id="CHEBI:18420"/>
        <label>2</label>
    </ligand>
</feature>
<feature type="binding site" evidence="1">
    <location>
        <position position="300"/>
    </location>
    <ligand>
        <name>Mn(2+)</name>
        <dbReference type="ChEBI" id="CHEBI:29035"/>
        <label>2</label>
    </ligand>
</feature>
<feature type="binding site" evidence="1">
    <location>
        <position position="707"/>
    </location>
    <ligand>
        <name>ATP</name>
        <dbReference type="ChEBI" id="CHEBI:30616"/>
        <label>2</label>
    </ligand>
</feature>
<feature type="binding site" evidence="1">
    <location>
        <position position="746"/>
    </location>
    <ligand>
        <name>ATP</name>
        <dbReference type="ChEBI" id="CHEBI:30616"/>
        <label>2</label>
    </ligand>
</feature>
<feature type="binding site" evidence="1">
    <location>
        <position position="748"/>
    </location>
    <ligand>
        <name>ATP</name>
        <dbReference type="ChEBI" id="CHEBI:30616"/>
        <label>2</label>
    </ligand>
</feature>
<feature type="binding site" evidence="1">
    <location>
        <position position="752"/>
    </location>
    <ligand>
        <name>ATP</name>
        <dbReference type="ChEBI" id="CHEBI:30616"/>
        <label>2</label>
    </ligand>
</feature>
<feature type="binding site" evidence="1">
    <location>
        <position position="777"/>
    </location>
    <ligand>
        <name>ATP</name>
        <dbReference type="ChEBI" id="CHEBI:30616"/>
        <label>2</label>
    </ligand>
</feature>
<feature type="binding site" evidence="1">
    <location>
        <position position="778"/>
    </location>
    <ligand>
        <name>ATP</name>
        <dbReference type="ChEBI" id="CHEBI:30616"/>
        <label>2</label>
    </ligand>
</feature>
<feature type="binding site" evidence="1">
    <location>
        <position position="779"/>
    </location>
    <ligand>
        <name>ATP</name>
        <dbReference type="ChEBI" id="CHEBI:30616"/>
        <label>2</label>
    </ligand>
</feature>
<feature type="binding site" evidence="1">
    <location>
        <position position="780"/>
    </location>
    <ligand>
        <name>ATP</name>
        <dbReference type="ChEBI" id="CHEBI:30616"/>
        <label>2</label>
    </ligand>
</feature>
<feature type="binding site" evidence="1">
    <location>
        <position position="820"/>
    </location>
    <ligand>
        <name>ATP</name>
        <dbReference type="ChEBI" id="CHEBI:30616"/>
        <label>2</label>
    </ligand>
</feature>
<feature type="binding site" evidence="1">
    <location>
        <position position="820"/>
    </location>
    <ligand>
        <name>Mg(2+)</name>
        <dbReference type="ChEBI" id="CHEBI:18420"/>
        <label>3</label>
    </ligand>
</feature>
<feature type="binding site" evidence="1">
    <location>
        <position position="820"/>
    </location>
    <ligand>
        <name>Mn(2+)</name>
        <dbReference type="ChEBI" id="CHEBI:29035"/>
        <label>3</label>
    </ligand>
</feature>
<feature type="binding site" evidence="1">
    <location>
        <position position="832"/>
    </location>
    <ligand>
        <name>ATP</name>
        <dbReference type="ChEBI" id="CHEBI:30616"/>
        <label>2</label>
    </ligand>
</feature>
<feature type="binding site" evidence="1">
    <location>
        <position position="832"/>
    </location>
    <ligand>
        <name>Mg(2+)</name>
        <dbReference type="ChEBI" id="CHEBI:18420"/>
        <label>3</label>
    </ligand>
</feature>
<feature type="binding site" evidence="1">
    <location>
        <position position="832"/>
    </location>
    <ligand>
        <name>Mg(2+)</name>
        <dbReference type="ChEBI" id="CHEBI:18420"/>
        <label>4</label>
    </ligand>
</feature>
<feature type="binding site" evidence="1">
    <location>
        <position position="832"/>
    </location>
    <ligand>
        <name>Mn(2+)</name>
        <dbReference type="ChEBI" id="CHEBI:29035"/>
        <label>3</label>
    </ligand>
</feature>
<feature type="binding site" evidence="1">
    <location>
        <position position="832"/>
    </location>
    <ligand>
        <name>Mn(2+)</name>
        <dbReference type="ChEBI" id="CHEBI:29035"/>
        <label>4</label>
    </ligand>
</feature>
<feature type="binding site" evidence="1">
    <location>
        <position position="834"/>
    </location>
    <ligand>
        <name>Mg(2+)</name>
        <dbReference type="ChEBI" id="CHEBI:18420"/>
        <label>4</label>
    </ligand>
</feature>
<feature type="binding site" evidence="1">
    <location>
        <position position="834"/>
    </location>
    <ligand>
        <name>Mn(2+)</name>
        <dbReference type="ChEBI" id="CHEBI:29035"/>
        <label>4</label>
    </ligand>
</feature>
<evidence type="ECO:0000255" key="1">
    <source>
        <dbReference type="HAMAP-Rule" id="MF_01210"/>
    </source>
</evidence>
<proteinExistence type="inferred from homology"/>
<protein>
    <recommendedName>
        <fullName evidence="1">Carbamoyl phosphate synthase large chain</fullName>
        <ecNumber evidence="1">6.3.4.16</ecNumber>
        <ecNumber evidence="1">6.3.5.5</ecNumber>
    </recommendedName>
    <alternativeName>
        <fullName evidence="1">Carbamoyl phosphate synthetase ammonia chain</fullName>
    </alternativeName>
</protein>
<accession>Q1WVA9</accession>
<gene>
    <name evidence="1" type="primary">carB</name>
    <name type="ordered locus">LSL_0193</name>
</gene>